<organism>
    <name type="scientific">Clostridium botulinum (strain 657 / Type Ba4)</name>
    <dbReference type="NCBI Taxonomy" id="515621"/>
    <lineage>
        <taxon>Bacteria</taxon>
        <taxon>Bacillati</taxon>
        <taxon>Bacillota</taxon>
        <taxon>Clostridia</taxon>
        <taxon>Eubacteriales</taxon>
        <taxon>Clostridiaceae</taxon>
        <taxon>Clostridium</taxon>
    </lineage>
</organism>
<protein>
    <recommendedName>
        <fullName evidence="1">Imidazole glycerol phosphate synthase subunit HisF</fullName>
        <ecNumber evidence="1">4.3.2.10</ecNumber>
    </recommendedName>
    <alternativeName>
        <fullName evidence="1">IGP synthase cyclase subunit</fullName>
    </alternativeName>
    <alternativeName>
        <fullName evidence="1">IGP synthase subunit HisF</fullName>
    </alternativeName>
    <alternativeName>
        <fullName evidence="1">ImGP synthase subunit HisF</fullName>
        <shortName evidence="1">IGPS subunit HisF</shortName>
    </alternativeName>
</protein>
<name>HIS6_CLOB6</name>
<gene>
    <name evidence="1" type="primary">hisF</name>
    <name type="ordered locus">CLJ_B1679</name>
</gene>
<comment type="function">
    <text evidence="1">IGPS catalyzes the conversion of PRFAR and glutamine to IGP, AICAR and glutamate. The HisF subunit catalyzes the cyclization activity that produces IGP and AICAR from PRFAR using the ammonia provided by the HisH subunit.</text>
</comment>
<comment type="catalytic activity">
    <reaction evidence="1">
        <text>5-[(5-phospho-1-deoxy-D-ribulos-1-ylimino)methylamino]-1-(5-phospho-beta-D-ribosyl)imidazole-4-carboxamide + L-glutamine = D-erythro-1-(imidazol-4-yl)glycerol 3-phosphate + 5-amino-1-(5-phospho-beta-D-ribosyl)imidazole-4-carboxamide + L-glutamate + H(+)</text>
        <dbReference type="Rhea" id="RHEA:24793"/>
        <dbReference type="ChEBI" id="CHEBI:15378"/>
        <dbReference type="ChEBI" id="CHEBI:29985"/>
        <dbReference type="ChEBI" id="CHEBI:58278"/>
        <dbReference type="ChEBI" id="CHEBI:58359"/>
        <dbReference type="ChEBI" id="CHEBI:58475"/>
        <dbReference type="ChEBI" id="CHEBI:58525"/>
        <dbReference type="EC" id="4.3.2.10"/>
    </reaction>
</comment>
<comment type="pathway">
    <text evidence="1">Amino-acid biosynthesis; L-histidine biosynthesis; L-histidine from 5-phospho-alpha-D-ribose 1-diphosphate: step 5/9.</text>
</comment>
<comment type="subunit">
    <text evidence="1">Heterodimer of HisH and HisF.</text>
</comment>
<comment type="subcellular location">
    <subcellularLocation>
        <location evidence="1">Cytoplasm</location>
    </subcellularLocation>
</comment>
<comment type="similarity">
    <text evidence="1">Belongs to the HisA/HisF family.</text>
</comment>
<reference key="1">
    <citation type="submission" date="2008-05" db="EMBL/GenBank/DDBJ databases">
        <title>Genome sequence of Clostridium botulinum Ba4 strain 657.</title>
        <authorList>
            <person name="Shrivastava S."/>
            <person name="Brown J.L."/>
            <person name="Bruce D."/>
            <person name="Detter C."/>
            <person name="Munk C."/>
            <person name="Smith L.A."/>
            <person name="Smith T.J."/>
            <person name="Sutton G."/>
            <person name="Brettin T.S."/>
        </authorList>
    </citation>
    <scope>NUCLEOTIDE SEQUENCE [LARGE SCALE GENOMIC DNA]</scope>
    <source>
        <strain>657 / Type Ba4</strain>
    </source>
</reference>
<accession>C3KVX6</accession>
<sequence>MITKRIIPCLDVDMGRVVKGVNFVNLKDVGDPVEIAEFYNKEGADEIVFLDISATHEGRATMIDVVRKTAEKLFIPLTVGGGIKNINDFRDILRAGADKISVNSSAIRNPKLIKKAAECFGSQCVVVAIDGKKRKDKDGWNVFINGGRIDTGLDAIEWARKVEKLGAGEILLTSMDADGTKEGYDLEFTNEVSKTVNIPVIASGGCGKLKHFGEILKKSSADAALAASLFHFKELSIEEVKNYLKKEGFSVRL</sequence>
<keyword id="KW-0028">Amino-acid biosynthesis</keyword>
<keyword id="KW-0963">Cytoplasm</keyword>
<keyword id="KW-0368">Histidine biosynthesis</keyword>
<keyword id="KW-0456">Lyase</keyword>
<proteinExistence type="inferred from homology"/>
<evidence type="ECO:0000255" key="1">
    <source>
        <dbReference type="HAMAP-Rule" id="MF_01013"/>
    </source>
</evidence>
<feature type="chain" id="PRO_1000213205" description="Imidazole glycerol phosphate synthase subunit HisF">
    <location>
        <begin position="1"/>
        <end position="253"/>
    </location>
</feature>
<feature type="active site" evidence="1">
    <location>
        <position position="11"/>
    </location>
</feature>
<feature type="active site" evidence="1">
    <location>
        <position position="130"/>
    </location>
</feature>
<dbReference type="EC" id="4.3.2.10" evidence="1"/>
<dbReference type="EMBL" id="CP001083">
    <property type="protein sequence ID" value="ACQ51566.1"/>
    <property type="molecule type" value="Genomic_DNA"/>
</dbReference>
<dbReference type="RefSeq" id="WP_003360810.1">
    <property type="nucleotide sequence ID" value="NC_012658.1"/>
</dbReference>
<dbReference type="SMR" id="C3KVX6"/>
<dbReference type="KEGG" id="cbi:CLJ_B1679"/>
<dbReference type="HOGENOM" id="CLU_048577_4_0_9"/>
<dbReference type="UniPathway" id="UPA00031">
    <property type="reaction ID" value="UER00010"/>
</dbReference>
<dbReference type="Proteomes" id="UP000002333">
    <property type="component" value="Chromosome"/>
</dbReference>
<dbReference type="GO" id="GO:0005737">
    <property type="term" value="C:cytoplasm"/>
    <property type="evidence" value="ECO:0007669"/>
    <property type="project" value="UniProtKB-SubCell"/>
</dbReference>
<dbReference type="GO" id="GO:0000107">
    <property type="term" value="F:imidazoleglycerol-phosphate synthase activity"/>
    <property type="evidence" value="ECO:0007669"/>
    <property type="project" value="UniProtKB-UniRule"/>
</dbReference>
<dbReference type="GO" id="GO:0016829">
    <property type="term" value="F:lyase activity"/>
    <property type="evidence" value="ECO:0007669"/>
    <property type="project" value="UniProtKB-KW"/>
</dbReference>
<dbReference type="GO" id="GO:0000105">
    <property type="term" value="P:L-histidine biosynthetic process"/>
    <property type="evidence" value="ECO:0007669"/>
    <property type="project" value="UniProtKB-UniRule"/>
</dbReference>
<dbReference type="CDD" id="cd04731">
    <property type="entry name" value="HisF"/>
    <property type="match status" value="1"/>
</dbReference>
<dbReference type="FunFam" id="3.20.20.70:FF:000006">
    <property type="entry name" value="Imidazole glycerol phosphate synthase subunit HisF"/>
    <property type="match status" value="1"/>
</dbReference>
<dbReference type="Gene3D" id="3.20.20.70">
    <property type="entry name" value="Aldolase class I"/>
    <property type="match status" value="1"/>
</dbReference>
<dbReference type="HAMAP" id="MF_01013">
    <property type="entry name" value="HisF"/>
    <property type="match status" value="1"/>
</dbReference>
<dbReference type="InterPro" id="IPR013785">
    <property type="entry name" value="Aldolase_TIM"/>
</dbReference>
<dbReference type="InterPro" id="IPR006062">
    <property type="entry name" value="His_biosynth"/>
</dbReference>
<dbReference type="InterPro" id="IPR004651">
    <property type="entry name" value="HisF"/>
</dbReference>
<dbReference type="InterPro" id="IPR050064">
    <property type="entry name" value="IGPS_HisA/HisF"/>
</dbReference>
<dbReference type="InterPro" id="IPR011060">
    <property type="entry name" value="RibuloseP-bd_barrel"/>
</dbReference>
<dbReference type="NCBIfam" id="TIGR00735">
    <property type="entry name" value="hisF"/>
    <property type="match status" value="1"/>
</dbReference>
<dbReference type="PANTHER" id="PTHR21235:SF2">
    <property type="entry name" value="IMIDAZOLE GLYCEROL PHOSPHATE SYNTHASE HISHF"/>
    <property type="match status" value="1"/>
</dbReference>
<dbReference type="PANTHER" id="PTHR21235">
    <property type="entry name" value="IMIDAZOLE GLYCEROL PHOSPHATE SYNTHASE SUBUNIT HISF/H IGP SYNTHASE SUBUNIT HISF/H"/>
    <property type="match status" value="1"/>
</dbReference>
<dbReference type="Pfam" id="PF00977">
    <property type="entry name" value="His_biosynth"/>
    <property type="match status" value="1"/>
</dbReference>
<dbReference type="SUPFAM" id="SSF51366">
    <property type="entry name" value="Ribulose-phoshate binding barrel"/>
    <property type="match status" value="1"/>
</dbReference>